<proteinExistence type="inferred from homology"/>
<evidence type="ECO:0000255" key="1">
    <source>
        <dbReference type="HAMAP-Rule" id="MF_01628"/>
    </source>
</evidence>
<dbReference type="EC" id="2.4.2.4" evidence="1"/>
<dbReference type="EMBL" id="BX571966">
    <property type="protein sequence ID" value="CAH39438.1"/>
    <property type="molecule type" value="Genomic_DNA"/>
</dbReference>
<dbReference type="RefSeq" id="WP_004188257.1">
    <property type="nucleotide sequence ID" value="NZ_CP009537.1"/>
</dbReference>
<dbReference type="RefSeq" id="YP_111966.1">
    <property type="nucleotide sequence ID" value="NC_006351.1"/>
</dbReference>
<dbReference type="SMR" id="Q63IV6"/>
<dbReference type="STRING" id="272560.BPSS1960"/>
<dbReference type="GeneID" id="93064188"/>
<dbReference type="KEGG" id="bps:BPSS1960"/>
<dbReference type="PATRIC" id="fig|272560.51.peg.5454"/>
<dbReference type="eggNOG" id="COG0213">
    <property type="taxonomic scope" value="Bacteria"/>
</dbReference>
<dbReference type="UniPathway" id="UPA00578">
    <property type="reaction ID" value="UER00638"/>
</dbReference>
<dbReference type="Proteomes" id="UP000000605">
    <property type="component" value="Chromosome 2"/>
</dbReference>
<dbReference type="GO" id="GO:0005829">
    <property type="term" value="C:cytosol"/>
    <property type="evidence" value="ECO:0007669"/>
    <property type="project" value="TreeGrafter"/>
</dbReference>
<dbReference type="GO" id="GO:0004645">
    <property type="term" value="F:1,4-alpha-oligoglucan phosphorylase activity"/>
    <property type="evidence" value="ECO:0007669"/>
    <property type="project" value="InterPro"/>
</dbReference>
<dbReference type="GO" id="GO:0009032">
    <property type="term" value="F:thymidine phosphorylase activity"/>
    <property type="evidence" value="ECO:0007669"/>
    <property type="project" value="UniProtKB-UniRule"/>
</dbReference>
<dbReference type="GO" id="GO:0006206">
    <property type="term" value="P:pyrimidine nucleobase metabolic process"/>
    <property type="evidence" value="ECO:0007669"/>
    <property type="project" value="InterPro"/>
</dbReference>
<dbReference type="GO" id="GO:0046104">
    <property type="term" value="P:thymidine metabolic process"/>
    <property type="evidence" value="ECO:0007669"/>
    <property type="project" value="UniProtKB-UniRule"/>
</dbReference>
<dbReference type="FunFam" id="3.40.1030.10:FF:000001">
    <property type="entry name" value="Thymidine phosphorylase"/>
    <property type="match status" value="1"/>
</dbReference>
<dbReference type="Gene3D" id="3.40.1030.10">
    <property type="entry name" value="Nucleoside phosphorylase/phosphoribosyltransferase catalytic domain"/>
    <property type="match status" value="1"/>
</dbReference>
<dbReference type="Gene3D" id="3.90.1170.30">
    <property type="entry name" value="Pyrimidine nucleoside phosphorylase-like, C-terminal domain"/>
    <property type="match status" value="1"/>
</dbReference>
<dbReference type="Gene3D" id="1.20.970.10">
    <property type="entry name" value="Transferase, Pyrimidine Nucleoside Phosphorylase, Chain C"/>
    <property type="match status" value="1"/>
</dbReference>
<dbReference type="HAMAP" id="MF_01628">
    <property type="entry name" value="Thymid_phosp"/>
    <property type="match status" value="1"/>
</dbReference>
<dbReference type="InterPro" id="IPR000312">
    <property type="entry name" value="Glycosyl_Trfase_fam3"/>
</dbReference>
<dbReference type="InterPro" id="IPR017459">
    <property type="entry name" value="Glycosyl_Trfase_fam3_N_dom"/>
</dbReference>
<dbReference type="InterPro" id="IPR036320">
    <property type="entry name" value="Glycosyl_Trfase_fam3_N_dom_sf"/>
</dbReference>
<dbReference type="InterPro" id="IPR035902">
    <property type="entry name" value="Nuc_phospho_transferase"/>
</dbReference>
<dbReference type="InterPro" id="IPR036566">
    <property type="entry name" value="PYNP-like_C_sf"/>
</dbReference>
<dbReference type="InterPro" id="IPR013102">
    <property type="entry name" value="PYNP_C"/>
</dbReference>
<dbReference type="InterPro" id="IPR018090">
    <property type="entry name" value="Pyrmidine_PPas_bac/euk"/>
</dbReference>
<dbReference type="InterPro" id="IPR017872">
    <property type="entry name" value="Pyrmidine_PPase_CS"/>
</dbReference>
<dbReference type="InterPro" id="IPR000053">
    <property type="entry name" value="Thymidine/pyrmidine_PPase"/>
</dbReference>
<dbReference type="InterPro" id="IPR013465">
    <property type="entry name" value="Thymidine_Pase"/>
</dbReference>
<dbReference type="NCBIfam" id="NF004490">
    <property type="entry name" value="PRK05820.1"/>
    <property type="match status" value="1"/>
</dbReference>
<dbReference type="NCBIfam" id="TIGR02643">
    <property type="entry name" value="T_phosphoryl"/>
    <property type="match status" value="1"/>
</dbReference>
<dbReference type="NCBIfam" id="TIGR02644">
    <property type="entry name" value="Y_phosphoryl"/>
    <property type="match status" value="1"/>
</dbReference>
<dbReference type="PANTHER" id="PTHR10515">
    <property type="entry name" value="THYMIDINE PHOSPHORYLASE"/>
    <property type="match status" value="1"/>
</dbReference>
<dbReference type="PANTHER" id="PTHR10515:SF0">
    <property type="entry name" value="THYMIDINE PHOSPHORYLASE"/>
    <property type="match status" value="1"/>
</dbReference>
<dbReference type="Pfam" id="PF02885">
    <property type="entry name" value="Glycos_trans_3N"/>
    <property type="match status" value="1"/>
</dbReference>
<dbReference type="Pfam" id="PF00591">
    <property type="entry name" value="Glycos_transf_3"/>
    <property type="match status" value="1"/>
</dbReference>
<dbReference type="Pfam" id="PF07831">
    <property type="entry name" value="PYNP_C"/>
    <property type="match status" value="1"/>
</dbReference>
<dbReference type="PIRSF" id="PIRSF000478">
    <property type="entry name" value="TP_PyNP"/>
    <property type="match status" value="1"/>
</dbReference>
<dbReference type="SMART" id="SM00941">
    <property type="entry name" value="PYNP_C"/>
    <property type="match status" value="1"/>
</dbReference>
<dbReference type="SUPFAM" id="SSF52418">
    <property type="entry name" value="Nucleoside phosphorylase/phosphoribosyltransferase catalytic domain"/>
    <property type="match status" value="1"/>
</dbReference>
<dbReference type="SUPFAM" id="SSF47648">
    <property type="entry name" value="Nucleoside phosphorylase/phosphoribosyltransferase N-terminal domain"/>
    <property type="match status" value="1"/>
</dbReference>
<dbReference type="SUPFAM" id="SSF54680">
    <property type="entry name" value="Pyrimidine nucleoside phosphorylase C-terminal domain"/>
    <property type="match status" value="1"/>
</dbReference>
<dbReference type="PROSITE" id="PS00647">
    <property type="entry name" value="THYMID_PHOSPHORYLASE"/>
    <property type="match status" value="1"/>
</dbReference>
<protein>
    <recommendedName>
        <fullName evidence="1">Thymidine phosphorylase</fullName>
        <ecNumber evidence="1">2.4.2.4</ecNumber>
    </recommendedName>
    <alternativeName>
        <fullName evidence="1">TdRPase</fullName>
    </alternativeName>
</protein>
<comment type="function">
    <text evidence="1">The enzymes which catalyze the reversible phosphorolysis of pyrimidine nucleosides are involved in the degradation of these compounds and in their utilization as carbon and energy sources, or in the rescue of pyrimidine bases for nucleotide synthesis.</text>
</comment>
<comment type="catalytic activity">
    <reaction evidence="1">
        <text>thymidine + phosphate = 2-deoxy-alpha-D-ribose 1-phosphate + thymine</text>
        <dbReference type="Rhea" id="RHEA:16037"/>
        <dbReference type="ChEBI" id="CHEBI:17748"/>
        <dbReference type="ChEBI" id="CHEBI:17821"/>
        <dbReference type="ChEBI" id="CHEBI:43474"/>
        <dbReference type="ChEBI" id="CHEBI:57259"/>
        <dbReference type="EC" id="2.4.2.4"/>
    </reaction>
</comment>
<comment type="pathway">
    <text evidence="1">Pyrimidine metabolism; dTMP biosynthesis via salvage pathway; dTMP from thymine: step 1/2.</text>
</comment>
<comment type="subunit">
    <text evidence="1">Homodimer.</text>
</comment>
<comment type="similarity">
    <text evidence="1">Belongs to the thymidine/pyrimidine-nucleoside phosphorylase family.</text>
</comment>
<gene>
    <name evidence="1" type="primary">deoA</name>
    <name type="ordered locus">BPSS1960</name>
</gene>
<sequence>MTFLPQEFIRKVRDRAPLDTADVARFVQGVTAGDVTEGQIAAFAMAVYFNELPLSARIALTLAQRDSGDVLDWRGARLNGPVVDKHSTGGVGDLTSLVIGPMVAACGGYVPMISGRGLGHTGGTLDKLEAIPGYDVAPSVDMLRRVVRDAGLAIVGQTAQLAPADKRIYAVRDVTATVESISLITASILSKKLAAGVGALAMDVKVGSGAFMPSAEQSAELARSIVDVGNGAGMRTAATLTDMNQALAPCAGNAIEVRCAIDFLTGAARPARLEAVSFALAAQMLTMGGLAADAHDARRRLRAVLESGAAAERFARMVAALGGPADLVERPERHLPRAAAAAPVAAARAGWIERIDARALGLAVVGLGGGRAKIGDTLDYSVGLSALAELGERVEAGQPLATVHARDADSAAQATDAVRRAYRIGAEPPAQTRVVHAVIE</sequence>
<feature type="chain" id="PRO_0000059050" description="Thymidine phosphorylase">
    <location>
        <begin position="1"/>
        <end position="440"/>
    </location>
</feature>
<organism>
    <name type="scientific">Burkholderia pseudomallei (strain K96243)</name>
    <dbReference type="NCBI Taxonomy" id="272560"/>
    <lineage>
        <taxon>Bacteria</taxon>
        <taxon>Pseudomonadati</taxon>
        <taxon>Pseudomonadota</taxon>
        <taxon>Betaproteobacteria</taxon>
        <taxon>Burkholderiales</taxon>
        <taxon>Burkholderiaceae</taxon>
        <taxon>Burkholderia</taxon>
        <taxon>pseudomallei group</taxon>
    </lineage>
</organism>
<reference key="1">
    <citation type="journal article" date="2004" name="Proc. Natl. Acad. Sci. U.S.A.">
        <title>Genomic plasticity of the causative agent of melioidosis, Burkholderia pseudomallei.</title>
        <authorList>
            <person name="Holden M.T.G."/>
            <person name="Titball R.W."/>
            <person name="Peacock S.J."/>
            <person name="Cerdeno-Tarraga A.-M."/>
            <person name="Atkins T."/>
            <person name="Crossman L.C."/>
            <person name="Pitt T."/>
            <person name="Churcher C."/>
            <person name="Mungall K.L."/>
            <person name="Bentley S.D."/>
            <person name="Sebaihia M."/>
            <person name="Thomson N.R."/>
            <person name="Bason N."/>
            <person name="Beacham I.R."/>
            <person name="Brooks K."/>
            <person name="Brown K.A."/>
            <person name="Brown N.F."/>
            <person name="Challis G.L."/>
            <person name="Cherevach I."/>
            <person name="Chillingworth T."/>
            <person name="Cronin A."/>
            <person name="Crossett B."/>
            <person name="Davis P."/>
            <person name="DeShazer D."/>
            <person name="Feltwell T."/>
            <person name="Fraser A."/>
            <person name="Hance Z."/>
            <person name="Hauser H."/>
            <person name="Holroyd S."/>
            <person name="Jagels K."/>
            <person name="Keith K.E."/>
            <person name="Maddison M."/>
            <person name="Moule S."/>
            <person name="Price C."/>
            <person name="Quail M.A."/>
            <person name="Rabbinowitsch E."/>
            <person name="Rutherford K."/>
            <person name="Sanders M."/>
            <person name="Simmonds M."/>
            <person name="Songsivilai S."/>
            <person name="Stevens K."/>
            <person name="Tumapa S."/>
            <person name="Vesaratchavest M."/>
            <person name="Whitehead S."/>
            <person name="Yeats C."/>
            <person name="Barrell B.G."/>
            <person name="Oyston P.C.F."/>
            <person name="Parkhill J."/>
        </authorList>
    </citation>
    <scope>NUCLEOTIDE SEQUENCE [LARGE SCALE GENOMIC DNA]</scope>
    <source>
        <strain>K96243</strain>
    </source>
</reference>
<name>TYPH_BURPS</name>
<accession>Q63IV6</accession>
<keyword id="KW-0328">Glycosyltransferase</keyword>
<keyword id="KW-1185">Reference proteome</keyword>
<keyword id="KW-0808">Transferase</keyword>